<feature type="chain" id="PRO_0000178024" description="Solute carrier family 12 member 2">
    <location>
        <begin position="1"/>
        <end position="1205"/>
    </location>
</feature>
<feature type="topological domain" description="Cytoplasmic" evidence="16">
    <location>
        <begin position="1"/>
        <end position="279"/>
    </location>
</feature>
<feature type="transmembrane region" description="Discontinuously helical; Name=1" evidence="2">
    <location>
        <begin position="280"/>
        <end position="309"/>
    </location>
</feature>
<feature type="transmembrane region" description="Helical; Name=2" evidence="2">
    <location>
        <begin position="310"/>
        <end position="329"/>
    </location>
</feature>
<feature type="topological domain" description="Cytoplasmic" evidence="16">
    <location>
        <begin position="330"/>
        <end position="360"/>
    </location>
</feature>
<feature type="transmembrane region" description="Helical; Name=3" evidence="2">
    <location>
        <begin position="361"/>
        <end position="388"/>
    </location>
</feature>
<feature type="topological domain" description="Extracellular" evidence="16">
    <location>
        <begin position="389"/>
        <end position="398"/>
    </location>
</feature>
<feature type="transmembrane region" description="Helical; Name=4" evidence="2">
    <location>
        <begin position="399"/>
        <end position="422"/>
    </location>
</feature>
<feature type="topological domain" description="Cytoplasmic" evidence="16">
    <location>
        <begin position="423"/>
        <end position="425"/>
    </location>
</feature>
<feature type="transmembrane region" description="Helical; Name=5" evidence="2">
    <location>
        <begin position="426"/>
        <end position="447"/>
    </location>
</feature>
<feature type="topological domain" description="Extracellular" evidence="16">
    <location>
        <begin position="448"/>
        <end position="479"/>
    </location>
</feature>
<feature type="transmembrane region" description="Discontinuously helical; Name=6" evidence="2">
    <location>
        <begin position="480"/>
        <end position="497"/>
    </location>
</feature>
<feature type="topological domain" description="Cytoplasmic" evidence="16">
    <location>
        <begin position="498"/>
        <end position="512"/>
    </location>
</feature>
<feature type="transmembrane region" description="Helical; Name=7" evidence="2">
    <location>
        <begin position="513"/>
        <end position="534"/>
    </location>
</feature>
<feature type="topological domain" description="Extracellular" evidence="16">
    <location>
        <begin position="535"/>
        <end position="591"/>
    </location>
</feature>
<feature type="transmembrane region" description="Helical; Name=8" evidence="2">
    <location>
        <begin position="592"/>
        <end position="616"/>
    </location>
</feature>
<feature type="topological domain" description="Cytoplasmic" evidence="16">
    <location>
        <begin position="617"/>
        <end position="644"/>
    </location>
</feature>
<feature type="transmembrane region" description="Helical; Name=9" evidence="2">
    <location>
        <begin position="645"/>
        <end position="665"/>
    </location>
</feature>
<feature type="transmembrane region" description="Helical; Name=10" evidence="2">
    <location>
        <begin position="666"/>
        <end position="684"/>
    </location>
</feature>
<feature type="topological domain" description="Cytoplasmic" evidence="16">
    <location>
        <begin position="685"/>
        <end position="707"/>
    </location>
</feature>
<feature type="transmembrane region" description="Helical; Name=11" evidence="2">
    <location>
        <begin position="708"/>
        <end position="725"/>
    </location>
</feature>
<feature type="transmembrane region" description="Helical; Name=12" evidence="2">
    <location>
        <begin position="726"/>
        <end position="738"/>
    </location>
</feature>
<feature type="topological domain" description="Cytoplasmic" evidence="16">
    <location>
        <begin position="739"/>
        <end position="1205"/>
    </location>
</feature>
<feature type="region of interest" description="Disordered" evidence="6">
    <location>
        <begin position="1"/>
        <end position="102"/>
    </location>
</feature>
<feature type="region of interest" description="Disordered" evidence="6">
    <location>
        <begin position="143"/>
        <end position="187"/>
    </location>
</feature>
<feature type="region of interest" description="Scissor helix" evidence="2">
    <location>
        <begin position="754"/>
        <end position="771"/>
    </location>
</feature>
<feature type="region of interest" description="Disordered" evidence="6">
    <location>
        <begin position="953"/>
        <end position="986"/>
    </location>
</feature>
<feature type="short sequence motif" description="RFXV motif 1" evidence="7">
    <location>
        <begin position="77"/>
        <end position="80"/>
    </location>
</feature>
<feature type="short sequence motif" description="RFXV motif 2" evidence="7">
    <location>
        <begin position="133"/>
        <end position="136"/>
    </location>
</feature>
<feature type="compositionally biased region" description="Low complexity" evidence="6">
    <location>
        <begin position="1"/>
        <end position="22"/>
    </location>
</feature>
<feature type="compositionally biased region" description="Basic residues" evidence="6">
    <location>
        <begin position="23"/>
        <end position="35"/>
    </location>
</feature>
<feature type="compositionally biased region" description="Low complexity" evidence="6">
    <location>
        <begin position="87"/>
        <end position="102"/>
    </location>
</feature>
<feature type="compositionally biased region" description="Low complexity" evidence="6">
    <location>
        <begin position="143"/>
        <end position="155"/>
    </location>
</feature>
<feature type="binding site" evidence="2">
    <location>
        <position position="290"/>
    </location>
    <ligand>
        <name>Na(+)</name>
        <dbReference type="ChEBI" id="CHEBI:29101"/>
    </ligand>
</feature>
<feature type="binding site" evidence="2">
    <location>
        <position position="291"/>
    </location>
    <ligand>
        <name>K(+)</name>
        <dbReference type="ChEBI" id="CHEBI:29103"/>
    </ligand>
</feature>
<feature type="binding site" evidence="2">
    <location>
        <position position="292"/>
    </location>
    <ligand>
        <name>K(+)</name>
        <dbReference type="ChEBI" id="CHEBI:29103"/>
    </ligand>
</feature>
<feature type="binding site" evidence="2">
    <location>
        <position position="293"/>
    </location>
    <ligand>
        <name>Na(+)</name>
        <dbReference type="ChEBI" id="CHEBI:29101"/>
    </ligand>
</feature>
<feature type="binding site" evidence="2">
    <location>
        <position position="294"/>
    </location>
    <ligand>
        <name>chloride</name>
        <dbReference type="ChEBI" id="CHEBI:17996"/>
        <label>1</label>
    </ligand>
</feature>
<feature type="binding site" evidence="2">
    <location>
        <position position="295"/>
    </location>
    <ligand>
        <name>chloride</name>
        <dbReference type="ChEBI" id="CHEBI:17996"/>
        <label>1</label>
    </ligand>
</feature>
<feature type="binding site" evidence="2">
    <location>
        <position position="296"/>
    </location>
    <ligand>
        <name>chloride</name>
        <dbReference type="ChEBI" id="CHEBI:17996"/>
        <label>1</label>
    </ligand>
</feature>
<feature type="binding site" evidence="2">
    <location>
        <position position="365"/>
    </location>
    <ligand>
        <name>chloride</name>
        <dbReference type="ChEBI" id="CHEBI:17996"/>
        <label>2</label>
    </ligand>
</feature>
<feature type="binding site" evidence="2">
    <location>
        <position position="376"/>
    </location>
    <ligand>
        <name>K(+)</name>
        <dbReference type="ChEBI" id="CHEBI:29103"/>
    </ligand>
</feature>
<feature type="binding site" evidence="2">
    <location>
        <position position="489"/>
    </location>
    <ligand>
        <name>chloride</name>
        <dbReference type="ChEBI" id="CHEBI:17996"/>
        <label>1</label>
    </ligand>
</feature>
<feature type="binding site" evidence="2">
    <location>
        <position position="489"/>
    </location>
    <ligand>
        <name>K(+)</name>
        <dbReference type="ChEBI" id="CHEBI:29103"/>
    </ligand>
</feature>
<feature type="binding site" evidence="2">
    <location>
        <position position="490"/>
    </location>
    <ligand>
        <name>chloride</name>
        <dbReference type="ChEBI" id="CHEBI:17996"/>
        <label>1</label>
    </ligand>
</feature>
<feature type="binding site" evidence="2">
    <location>
        <position position="490"/>
    </location>
    <ligand>
        <name>K(+)</name>
        <dbReference type="ChEBI" id="CHEBI:29103"/>
    </ligand>
</feature>
<feature type="binding site" evidence="2">
    <location>
        <position position="492"/>
    </location>
    <ligand>
        <name>K(+)</name>
        <dbReference type="ChEBI" id="CHEBI:29103"/>
    </ligand>
</feature>
<feature type="binding site" evidence="2">
    <location>
        <position position="493"/>
    </location>
    <ligand>
        <name>chloride</name>
        <dbReference type="ChEBI" id="CHEBI:17996"/>
        <label>2</label>
    </ligand>
</feature>
<feature type="binding site" evidence="2">
    <location>
        <position position="494"/>
    </location>
    <ligand>
        <name>chloride</name>
        <dbReference type="ChEBI" id="CHEBI:17996"/>
        <label>2</label>
    </ligand>
</feature>
<feature type="binding site" evidence="2">
    <location>
        <position position="603"/>
    </location>
    <ligand>
        <name>Na(+)</name>
        <dbReference type="ChEBI" id="CHEBI:29101"/>
    </ligand>
</feature>
<feature type="binding site" evidence="2">
    <location>
        <position position="606"/>
    </location>
    <ligand>
        <name>Na(+)</name>
        <dbReference type="ChEBI" id="CHEBI:29101"/>
    </ligand>
</feature>
<feature type="binding site" evidence="2">
    <location>
        <position position="607"/>
    </location>
    <ligand>
        <name>Na(+)</name>
        <dbReference type="ChEBI" id="CHEBI:29101"/>
    </ligand>
</feature>
<feature type="binding site" evidence="2">
    <location>
        <position position="675"/>
    </location>
    <ligand>
        <name>chloride</name>
        <dbReference type="ChEBI" id="CHEBI:17996"/>
        <label>2</label>
    </ligand>
</feature>
<feature type="binding site" evidence="2">
    <location>
        <position position="679"/>
    </location>
    <ligand>
        <name>chloride</name>
        <dbReference type="ChEBI" id="CHEBI:17996"/>
        <label>2</label>
    </ligand>
</feature>
<feature type="modified residue" description="N-acetylmethionine" evidence="2">
    <location>
        <position position="1"/>
    </location>
</feature>
<feature type="modified residue" description="Phosphoserine" evidence="2">
    <location>
        <position position="74"/>
    </location>
</feature>
<feature type="modified residue" description="Phosphoserine" evidence="2">
    <location>
        <position position="76"/>
    </location>
</feature>
<feature type="modified residue" description="Phosphothreonine" evidence="2">
    <location>
        <position position="196"/>
    </location>
</feature>
<feature type="modified residue" description="Phosphothreonine" evidence="2">
    <location>
        <position position="200"/>
    </location>
</feature>
<feature type="modified residue" description="Phosphothreonine" evidence="3">
    <location>
        <position position="205"/>
    </location>
</feature>
<feature type="modified residue" description="Phosphothreonine" evidence="2">
    <location>
        <position position="210"/>
    </location>
</feature>
<feature type="modified residue" description="Phosphothreonine" evidence="4">
    <location>
        <position position="223"/>
    </location>
</feature>
<feature type="modified residue" description="Phosphoserine" evidence="4">
    <location>
        <position position="235"/>
    </location>
</feature>
<feature type="modified residue" description="Phosphothreonine" evidence="17">
    <location>
        <position position="259"/>
    </location>
</feature>
<feature type="modified residue" description="Phosphoserine" evidence="17">
    <location>
        <position position="933"/>
    </location>
</feature>
<feature type="modified residue" description="Phosphoserine" evidence="18">
    <location>
        <position position="937"/>
    </location>
</feature>
<feature type="modified residue" description="Phosphoserine" evidence="18">
    <location>
        <position position="987"/>
    </location>
</feature>
<feature type="glycosylation site" description="N-linked (GlcNAc...) asparagine" evidence="9">
    <location>
        <position position="546"/>
    </location>
</feature>
<feature type="glycosylation site" description="N-linked (GlcNAc...) asparagine" evidence="5">
    <location>
        <position position="555"/>
    </location>
</feature>
<feature type="disulfide bond" evidence="2">
    <location>
        <begin position="556"/>
        <end position="561"/>
    </location>
</feature>
<feature type="disulfide bond" evidence="2">
    <location>
        <begin position="570"/>
        <end position="575"/>
    </location>
</feature>
<feature type="mutagenesis site" description="Abolished interaction with STK39/SPAK and subsequent phosphorylation and activation." evidence="7">
    <original>F</original>
    <variation>A</variation>
    <location>
        <position position="78"/>
    </location>
</feature>
<feature type="mutagenesis site" description="Abolished interaction with STK39/SPAK and subsequent phosphorylation and activation." evidence="7">
    <original>RV</original>
    <variation>AA</variation>
    <location>
        <begin position="135"/>
        <end position="136"/>
    </location>
</feature>
<feature type="mutagenesis site" description="Reduced potassium ion transmembrane transport." evidence="12">
    <original>A</original>
    <variation>V</variation>
    <location>
        <position position="320"/>
    </location>
</feature>
<feature type="mutagenesis site" description="Reduced potassium ion transmembrane transport." evidence="12">
    <original>N</original>
    <variation>I</variation>
    <location>
        <position position="369"/>
    </location>
</feature>
<feature type="mutagenesis site" description="Reduced potassium ion transmembrane transport." evidence="12">
    <original>A</original>
    <variation>L</variation>
    <location>
        <position position="372"/>
    </location>
</feature>
<feature type="mutagenesis site" description="Reduced potassium ion transmembrane transport." evidence="12">
    <original>R</original>
    <variation>Q</variation>
    <location>
        <position position="403"/>
    </location>
</feature>
<feature type="mutagenesis site" description="Decrease in K(+) influx and reduced sensitivity to inhibitor bumetanide." evidence="13">
    <original>R</original>
    <variation>A</variation>
    <location>
        <position position="794"/>
    </location>
</feature>
<feature type="mutagenesis site" description="Reduced potassium ion transmembrane transport." evidence="12">
    <location>
        <begin position="885"/>
        <end position="1205"/>
    </location>
</feature>
<feature type="mutagenesis site" description="Reduced potassium ion transmembrane transport." evidence="12">
    <original>E</original>
    <variation>K</variation>
    <location>
        <position position="973"/>
    </location>
</feature>
<feature type="sequence conflict" description="In Ref. 1; AAC77832." evidence="16" ref="1">
    <original>R</original>
    <variation>G</variation>
    <location>
        <position position="7"/>
    </location>
</feature>
<feature type="sequence conflict" description="In Ref. 1; AAC77832." evidence="16" ref="1">
    <original>F</original>
    <variation>Y</variation>
    <location>
        <position position="1097"/>
    </location>
</feature>
<proteinExistence type="evidence at protein level"/>
<keyword id="KW-0007">Acetylation</keyword>
<keyword id="KW-1003">Cell membrane</keyword>
<keyword id="KW-0868">Chloride</keyword>
<keyword id="KW-1015">Disulfide bond</keyword>
<keyword id="KW-0325">Glycoprotein</keyword>
<keyword id="KW-0406">Ion transport</keyword>
<keyword id="KW-0472">Membrane</keyword>
<keyword id="KW-0479">Metal-binding</keyword>
<keyword id="KW-0597">Phosphoprotein</keyword>
<keyword id="KW-0630">Potassium</keyword>
<keyword id="KW-0633">Potassium transport</keyword>
<keyword id="KW-1185">Reference proteome</keyword>
<keyword id="KW-0915">Sodium</keyword>
<keyword id="KW-0739">Sodium transport</keyword>
<keyword id="KW-0769">Symport</keyword>
<keyword id="KW-0812">Transmembrane</keyword>
<keyword id="KW-1133">Transmembrane helix</keyword>
<keyword id="KW-0813">Transport</keyword>
<evidence type="ECO:0000250" key="1">
    <source>
        <dbReference type="UniProtKB" id="A0A0G2KTI4"/>
    </source>
</evidence>
<evidence type="ECO:0000250" key="2">
    <source>
        <dbReference type="UniProtKB" id="P55011"/>
    </source>
</evidence>
<evidence type="ECO:0000250" key="3">
    <source>
        <dbReference type="UniProtKB" id="P55014"/>
    </source>
</evidence>
<evidence type="ECO:0000250" key="4">
    <source>
        <dbReference type="UniProtKB" id="P55016"/>
    </source>
</evidence>
<evidence type="ECO:0000255" key="5"/>
<evidence type="ECO:0000256" key="6">
    <source>
        <dbReference type="SAM" id="MobiDB-lite"/>
    </source>
</evidence>
<evidence type="ECO:0000269" key="7">
    <source>
    </source>
</evidence>
<evidence type="ECO:0000269" key="8">
    <source>
    </source>
</evidence>
<evidence type="ECO:0000269" key="9">
    <source>
    </source>
</evidence>
<evidence type="ECO:0000269" key="10">
    <source>
    </source>
</evidence>
<evidence type="ECO:0000269" key="11">
    <source>
    </source>
</evidence>
<evidence type="ECO:0000269" key="12">
    <source>
    </source>
</evidence>
<evidence type="ECO:0000269" key="13">
    <source>
    </source>
</evidence>
<evidence type="ECO:0000303" key="14">
    <source>
    </source>
</evidence>
<evidence type="ECO:0000303" key="15">
    <source>
    </source>
</evidence>
<evidence type="ECO:0000305" key="16"/>
<evidence type="ECO:0007744" key="17">
    <source>
    </source>
</evidence>
<evidence type="ECO:0007744" key="18">
    <source>
    </source>
</evidence>
<dbReference type="EMBL" id="U13174">
    <property type="protein sequence ID" value="AAC77832.1"/>
    <property type="molecule type" value="mRNA"/>
</dbReference>
<dbReference type="EMBL" id="AC127678">
    <property type="status" value="NOT_ANNOTATED_CDS"/>
    <property type="molecule type" value="Genomic_DNA"/>
</dbReference>
<dbReference type="PIR" id="A55015">
    <property type="entry name" value="A55015"/>
</dbReference>
<dbReference type="RefSeq" id="NP_033220.2">
    <property type="nucleotide sequence ID" value="NM_009194.3"/>
</dbReference>
<dbReference type="SMR" id="P55012"/>
<dbReference type="BioGRID" id="203277">
    <property type="interactions" value="12"/>
</dbReference>
<dbReference type="CORUM" id="P55012"/>
<dbReference type="ELM" id="P55012"/>
<dbReference type="FunCoup" id="P55012">
    <property type="interactions" value="702"/>
</dbReference>
<dbReference type="IntAct" id="P55012">
    <property type="interactions" value="4"/>
</dbReference>
<dbReference type="MINT" id="P55012"/>
<dbReference type="STRING" id="10090.ENSMUSP00000111023"/>
<dbReference type="GlyCosmos" id="P55012">
    <property type="glycosylation" value="2 sites, No reported glycans"/>
</dbReference>
<dbReference type="GlyGen" id="P55012">
    <property type="glycosylation" value="3 sites, 2 N-linked glycans (2 sites)"/>
</dbReference>
<dbReference type="iPTMnet" id="P55012"/>
<dbReference type="PhosphoSitePlus" id="P55012"/>
<dbReference type="SwissPalm" id="P55012"/>
<dbReference type="jPOST" id="P55012"/>
<dbReference type="PaxDb" id="10090-ENSMUSP00000111023"/>
<dbReference type="PeptideAtlas" id="P55012"/>
<dbReference type="ProteomicsDB" id="253337"/>
<dbReference type="Pumba" id="P55012"/>
<dbReference type="DNASU" id="20496"/>
<dbReference type="GeneID" id="20496"/>
<dbReference type="KEGG" id="mmu:20496"/>
<dbReference type="AGR" id="MGI:101924"/>
<dbReference type="CTD" id="6558"/>
<dbReference type="MGI" id="MGI:101924">
    <property type="gene designation" value="Slc12a2"/>
</dbReference>
<dbReference type="eggNOG" id="KOG2083">
    <property type="taxonomic scope" value="Eukaryota"/>
</dbReference>
<dbReference type="InParanoid" id="P55012"/>
<dbReference type="OrthoDB" id="2020542at2759"/>
<dbReference type="Reactome" id="R-MMU-426117">
    <property type="pathway name" value="Cation-coupled Chloride cotransporters"/>
</dbReference>
<dbReference type="BioGRID-ORCS" id="20496">
    <property type="hits" value="2 hits in 79 CRISPR screens"/>
</dbReference>
<dbReference type="CD-CODE" id="CE726F99">
    <property type="entry name" value="Postsynaptic density"/>
</dbReference>
<dbReference type="ChiTaRS" id="Slc12a2">
    <property type="organism name" value="mouse"/>
</dbReference>
<dbReference type="PRO" id="PR:P55012"/>
<dbReference type="Proteomes" id="UP000000589">
    <property type="component" value="Unplaced"/>
</dbReference>
<dbReference type="RNAct" id="P55012">
    <property type="molecule type" value="protein"/>
</dbReference>
<dbReference type="GO" id="GO:0016324">
    <property type="term" value="C:apical plasma membrane"/>
    <property type="evidence" value="ECO:0000314"/>
    <property type="project" value="MGI"/>
</dbReference>
<dbReference type="GO" id="GO:0016323">
    <property type="term" value="C:basolateral plasma membrane"/>
    <property type="evidence" value="ECO:0000314"/>
    <property type="project" value="UniProtKB"/>
</dbReference>
<dbReference type="GO" id="GO:0044297">
    <property type="term" value="C:cell body"/>
    <property type="evidence" value="ECO:0000314"/>
    <property type="project" value="ARUK-UCL"/>
</dbReference>
<dbReference type="GO" id="GO:0071944">
    <property type="term" value="C:cell periphery"/>
    <property type="evidence" value="ECO:0000314"/>
    <property type="project" value="ARUK-UCL"/>
</dbReference>
<dbReference type="GO" id="GO:0042995">
    <property type="term" value="C:cell projection"/>
    <property type="evidence" value="ECO:0000314"/>
    <property type="project" value="ARUK-UCL"/>
</dbReference>
<dbReference type="GO" id="GO:0043025">
    <property type="term" value="C:neuronal cell body"/>
    <property type="evidence" value="ECO:0000314"/>
    <property type="project" value="ARUK-UCL"/>
</dbReference>
<dbReference type="GO" id="GO:0046872">
    <property type="term" value="F:metal ion binding"/>
    <property type="evidence" value="ECO:0007669"/>
    <property type="project" value="UniProtKB-KW"/>
</dbReference>
<dbReference type="GO" id="GO:0015079">
    <property type="term" value="F:potassium ion transmembrane transporter activity"/>
    <property type="evidence" value="ECO:0000315"/>
    <property type="project" value="ARUK-UCL"/>
</dbReference>
<dbReference type="GO" id="GO:0008511">
    <property type="term" value="F:sodium:potassium:chloride symporter activity"/>
    <property type="evidence" value="ECO:0000305"/>
    <property type="project" value="ARUK-UCL"/>
</dbReference>
<dbReference type="GO" id="GO:0060444">
    <property type="term" value="P:branching involved in mammary gland duct morphogenesis"/>
    <property type="evidence" value="ECO:0000315"/>
    <property type="project" value="MGI"/>
</dbReference>
<dbReference type="GO" id="GO:0006884">
    <property type="term" value="P:cell volume homeostasis"/>
    <property type="evidence" value="ECO:0000315"/>
    <property type="project" value="ARUK-UCL"/>
</dbReference>
<dbReference type="GO" id="GO:1990869">
    <property type="term" value="P:cellular response to chemokine"/>
    <property type="evidence" value="ECO:0000315"/>
    <property type="project" value="BHF-UCL"/>
</dbReference>
<dbReference type="GO" id="GO:0071222">
    <property type="term" value="P:cellular response to lipopolysaccharide"/>
    <property type="evidence" value="ECO:0000314"/>
    <property type="project" value="MGI"/>
</dbReference>
<dbReference type="GO" id="GO:0035865">
    <property type="term" value="P:cellular response to potassium ion"/>
    <property type="evidence" value="ECO:0000315"/>
    <property type="project" value="ARUK-UCL"/>
</dbReference>
<dbReference type="GO" id="GO:1902476">
    <property type="term" value="P:chloride transmembrane transport"/>
    <property type="evidence" value="ECO:0000315"/>
    <property type="project" value="ARUK-UCL"/>
</dbReference>
<dbReference type="GO" id="GO:0050910">
    <property type="term" value="P:detection of mechanical stimulus involved in sensory perception of sound"/>
    <property type="evidence" value="ECO:0000315"/>
    <property type="project" value="MGI"/>
</dbReference>
<dbReference type="GO" id="GO:0098658">
    <property type="term" value="P:inorganic anion import across plasma membrane"/>
    <property type="evidence" value="ECO:0000315"/>
    <property type="project" value="ARUK-UCL"/>
</dbReference>
<dbReference type="GO" id="GO:0030644">
    <property type="term" value="P:intracellular chloride ion homeostasis"/>
    <property type="evidence" value="ECO:0000315"/>
    <property type="project" value="ARUK-UCL"/>
</dbReference>
<dbReference type="GO" id="GO:0030007">
    <property type="term" value="P:intracellular potassium ion homeostasis"/>
    <property type="evidence" value="ECO:0000315"/>
    <property type="project" value="ARUK-UCL"/>
</dbReference>
<dbReference type="GO" id="GO:0006883">
    <property type="term" value="P:intracellular sodium ion homeostasis"/>
    <property type="evidence" value="ECO:0000315"/>
    <property type="project" value="ARUK-UCL"/>
</dbReference>
<dbReference type="GO" id="GO:0035633">
    <property type="term" value="P:maintenance of blood-brain barrier"/>
    <property type="evidence" value="ECO:0000315"/>
    <property type="project" value="ARUK-UCL"/>
</dbReference>
<dbReference type="GO" id="GO:0060763">
    <property type="term" value="P:mammary duct terminal end bud growth"/>
    <property type="evidence" value="ECO:0000315"/>
    <property type="project" value="MGI"/>
</dbReference>
<dbReference type="GO" id="GO:0035264">
    <property type="term" value="P:multicellular organism growth"/>
    <property type="evidence" value="ECO:0000315"/>
    <property type="project" value="MGI"/>
</dbReference>
<dbReference type="GO" id="GO:0061044">
    <property type="term" value="P:negative regulation of vascular wound healing"/>
    <property type="evidence" value="ECO:0000315"/>
    <property type="project" value="ARUK-UCL"/>
</dbReference>
<dbReference type="GO" id="GO:1904450">
    <property type="term" value="P:positive regulation of aspartate secretion"/>
    <property type="evidence" value="ECO:0000315"/>
    <property type="project" value="ARUK-UCL"/>
</dbReference>
<dbReference type="GO" id="GO:1990573">
    <property type="term" value="P:potassium ion import across plasma membrane"/>
    <property type="evidence" value="ECO:0000315"/>
    <property type="project" value="ARUK-UCL"/>
</dbReference>
<dbReference type="GO" id="GO:1904464">
    <property type="term" value="P:regulation of matrix metallopeptidase secretion"/>
    <property type="evidence" value="ECO:0000315"/>
    <property type="project" value="ARUK-UCL"/>
</dbReference>
<dbReference type="GO" id="GO:0150003">
    <property type="term" value="P:regulation of spontaneous synaptic transmission"/>
    <property type="evidence" value="ECO:0000315"/>
    <property type="project" value="ARUK-UCL"/>
</dbReference>
<dbReference type="GO" id="GO:0098719">
    <property type="term" value="P:sodium ion import across plasma membrane"/>
    <property type="evidence" value="ECO:0000315"/>
    <property type="project" value="ARUK-UCL"/>
</dbReference>
<dbReference type="GO" id="GO:0010818">
    <property type="term" value="P:T cell chemotaxis"/>
    <property type="evidence" value="ECO:0000315"/>
    <property type="project" value="BHF-UCL"/>
</dbReference>
<dbReference type="FunFam" id="1.20.1740.10:FF:000005">
    <property type="entry name" value="Solute carrier family 12 member 1"/>
    <property type="match status" value="1"/>
</dbReference>
<dbReference type="Gene3D" id="1.20.1740.10">
    <property type="entry name" value="Amino acid/polyamine transporter I"/>
    <property type="match status" value="1"/>
</dbReference>
<dbReference type="InterPro" id="IPR004841">
    <property type="entry name" value="AA-permease/SLC12A_dom"/>
</dbReference>
<dbReference type="InterPro" id="IPR013612">
    <property type="entry name" value="AA_permease_N"/>
</dbReference>
<dbReference type="InterPro" id="IPR002444">
    <property type="entry name" value="NKCC1"/>
</dbReference>
<dbReference type="InterPro" id="IPR018491">
    <property type="entry name" value="SLC12_C"/>
</dbReference>
<dbReference type="InterPro" id="IPR002443">
    <property type="entry name" value="SLC12A1/SLC12A2"/>
</dbReference>
<dbReference type="InterPro" id="IPR004842">
    <property type="entry name" value="SLC12A_fam"/>
</dbReference>
<dbReference type="NCBIfam" id="TIGR00930">
    <property type="entry name" value="2a30"/>
    <property type="match status" value="1"/>
</dbReference>
<dbReference type="PANTHER" id="PTHR11827:SF58">
    <property type="entry name" value="SOLUTE CARRIER FAMILY 12 MEMBER 2"/>
    <property type="match status" value="1"/>
</dbReference>
<dbReference type="PANTHER" id="PTHR11827">
    <property type="entry name" value="SOLUTE CARRIER FAMILY 12, CATION COTRANSPORTERS"/>
    <property type="match status" value="1"/>
</dbReference>
<dbReference type="Pfam" id="PF00324">
    <property type="entry name" value="AA_permease"/>
    <property type="match status" value="1"/>
</dbReference>
<dbReference type="Pfam" id="PF08403">
    <property type="entry name" value="AA_permease_N"/>
    <property type="match status" value="1"/>
</dbReference>
<dbReference type="Pfam" id="PF03522">
    <property type="entry name" value="SLC12"/>
    <property type="match status" value="1"/>
</dbReference>
<dbReference type="PRINTS" id="PR01207">
    <property type="entry name" value="NAKCLTRNSPRT"/>
</dbReference>
<dbReference type="PRINTS" id="PR01208">
    <property type="entry name" value="NAKCLTRSPRT1"/>
</dbReference>
<organism>
    <name type="scientific">Mus musculus</name>
    <name type="common">Mouse</name>
    <dbReference type="NCBI Taxonomy" id="10090"/>
    <lineage>
        <taxon>Eukaryota</taxon>
        <taxon>Metazoa</taxon>
        <taxon>Chordata</taxon>
        <taxon>Craniata</taxon>
        <taxon>Vertebrata</taxon>
        <taxon>Euteleostomi</taxon>
        <taxon>Mammalia</taxon>
        <taxon>Eutheria</taxon>
        <taxon>Euarchontoglires</taxon>
        <taxon>Glires</taxon>
        <taxon>Rodentia</taxon>
        <taxon>Myomorpha</taxon>
        <taxon>Muroidea</taxon>
        <taxon>Muridae</taxon>
        <taxon>Murinae</taxon>
        <taxon>Mus</taxon>
        <taxon>Mus</taxon>
    </lineage>
</organism>
<comment type="function">
    <text evidence="2 7 12 13">Cation-chloride cotransporter which mediates the electroneutral transport of chloride, potassium and/or sodium ions across the membrane (PubMed:14563843, PubMed:32658972, PubMed:36306358). Plays a vital role in the regulation of ionic balance and cell volume (By similarity).</text>
</comment>
<comment type="catalytic activity">
    <reaction evidence="2">
        <text>K(+)(out) + 2 chloride(out) + Na(+)(out) = K(+)(in) + 2 chloride(in) + Na(+)(in)</text>
        <dbReference type="Rhea" id="RHEA:72395"/>
        <dbReference type="ChEBI" id="CHEBI:17996"/>
        <dbReference type="ChEBI" id="CHEBI:29101"/>
        <dbReference type="ChEBI" id="CHEBI:29103"/>
    </reaction>
    <physiologicalReaction direction="left-to-right" evidence="2">
        <dbReference type="Rhea" id="RHEA:72396"/>
    </physiologicalReaction>
</comment>
<comment type="activity regulation">
    <text evidence="7 8 10 13">Activated following phosphorylation by OXSR1/OSR1 and STK39/SPAK downstream of WNK kinases (WNK1, WNK2, WNK3 or WNK4). Inhibited by bumetanide and furosemide (PubMed:36306358).</text>
</comment>
<comment type="subunit">
    <text evidence="2">Homodimer; adopts a domain-swap conformation at the scissor helices connecting the transmembrane domain and C-terminal domain.</text>
</comment>
<comment type="interaction">
    <interactant intactId="EBI-621078">
        <id>P55012</id>
    </interactant>
    <interactant intactId="EBI-298727">
        <id>P47811</id>
        <label>Mapk14</label>
    </interactant>
    <organismsDiffer>false</organismsDiffer>
    <experiments>2</experiments>
</comment>
<comment type="interaction">
    <interactant intactId="EBI-621078">
        <id>P55012</id>
    </interactant>
    <interactant intactId="EBI-444764">
        <id>Q9Z1W9</id>
        <label>Stk39</label>
    </interactant>
    <organismsDiffer>false</organismsDiffer>
    <experiments>3</experiments>
</comment>
<comment type="subcellular location">
    <subcellularLocation>
        <location evidence="1">Basolateral cell membrane</location>
        <topology evidence="5">Multi-pass membrane protein</topology>
    </subcellularLocation>
</comment>
<comment type="tissue specificity">
    <text evidence="11">Widely expressed. High expression found in the cochlea, cochlear lateral wall, and the choroid plexus (PubMed:32294086). Lower expression found in the cerebellum and the cortex (PubMed:32294086).</text>
</comment>
<comment type="domain">
    <text evidence="7">The RFXV motifs mediate binding with OXSR1/OSR1 and STK39/SPAK.</text>
</comment>
<comment type="PTM">
    <text evidence="2">Phosphorylated at Thr-196, Thr-200 and Thr-205 by OXSR1/OSR1 and STK39/SPAK downstream of WNK kinases (WNK1, WNK2, WNK3 or WNK4), promoting its activity.</text>
</comment>
<comment type="similarity">
    <text evidence="16">Belongs to the SLC12A transporter family.</text>
</comment>
<accession>P55012</accession>
<accession>E9PYU3</accession>
<protein>
    <recommendedName>
        <fullName>Solute carrier family 12 member 2</fullName>
    </recommendedName>
    <alternativeName>
        <fullName>Basolateral Na-K-Cl symporter</fullName>
    </alternativeName>
    <alternativeName>
        <fullName evidence="15">Bumetanide-sensitive sodium-(potassium)-chloride cotransporter 2</fullName>
        <shortName>BSC2</shortName>
    </alternativeName>
    <alternativeName>
        <fullName evidence="14">Na-K-2Cl cotransporter 1</fullName>
        <shortName evidence="14">mNKCC1</shortName>
    </alternativeName>
</protein>
<sequence>MEPGPARPRLAPAARPGWGRAAGCRRRGGPARHGRASGQEDATTAGRQAGGGVRGEGTPAAGDGLGRPLGPTPSQSRFQVDPVSENAGRAAAAAAAAAAAAAAAGAAGKETPAAGKAGGESGVAKGSEEAKGRFRVNFVDPAASSSADDSLSDAAGVGGDGPNVSFQNGGDTVLSEGSSLHSGGGSGHHQQYYYDTHTNTYYLRTFGHNTMDAVPRIDHYRHTAAQLGEKLLRPSLAELHDELEKEPFEDGFANGEESTPTRDAVVAYTAESKGVVKFGWIKGVLVRCMLNIWGVMLFIRLSWIVGQAGIGLSVVVIAMATVVTTITGLSTSAIATNGFVRGGGAYYLISRSLGPEFGGAIGLIFAFANAVAVAMYVVGFAETVVELLKEHSILMIDEINDIRIIGAITVVILLGISVAGMEWEAKAQIVLLVILLLAIADFVIGTFISLESKKPKGFFGYKSEIFNENFGPDFREEETFFSVFAIFFPAATGILAGANISGDLADPQSAIPKGTLLAILITTVVYIGIAVSVGSCVVRDATGNVNDTITTELTNCTSAACKLNFDFSYCESNTCSYGLMNNFQVMSMVSGFAPLISAGIFSATLSSALASLVSAPKIFQALCKDNIYPAFQMFAKGYGKNNEPLRGYILTFLIALGFILIAELNVIAPIISNFFLASYALINFSVFHASLAKSPGWRPAFKYYNMWISLIGAILCCIVMFVINWWAALLTYVIVLGLYIYVTYKKPDVNWGSSTQALTYLSALQHSIRLSGVEDHVKNFRPQCLVMTGSPNSRPALLHLVHDFTKNVGLMICGHVHMGPRRQAMKEMSIDQARYQRWLIKNKMKAFYAPVHADDLREGAQYLMQAAGLGRMKPNTLVLGFKKDWLQADMRDVDMYINLFHDAFDIQFGVVVIRLKEGLDISHLQGQEELLSSQEKSPGTKDVVVNVDYSKKSDQDTCKSSGEKSITQKDEEEDGKTPTQPLLKKESKGPIVPLNVADQKLLEASTQFQKKQGKNTIDVWWLFDDGGLTLLIPYLLTTKKKWKDCKIRVFIGGKINRIDHDRRAMATLLSKFRIDFSDIMVLGDINTKPKKENIIAFDDMIEPYRLHEDDKEQDIADKMKEDEPWRITDNELELYKTKTYRQIRLNELLKEHSSTANIIVMSLPVARKGAVSSALYMAWLEALSKDLPPVLLVRGNHQSVLTFYS</sequence>
<gene>
    <name type="primary">Slc12a2</name>
    <name type="synonym">Nkcc1</name>
</gene>
<name>S12A2_MOUSE</name>
<reference key="1">
    <citation type="journal article" date="1994" name="J. Biol. Chem.">
        <title>Molecular cloning and chromosome localization of a putative basolateral Na(+)-K(+)-2Cl-cotransporter from mouse inner medullary collecting duct (mIMCD-3) cells.</title>
        <authorList>
            <person name="Delpire E."/>
            <person name="Rauchman M.I."/>
            <person name="Beier D.R."/>
            <person name="Hebert S.C."/>
            <person name="Gullans S.R."/>
        </authorList>
    </citation>
    <scope>NUCLEOTIDE SEQUENCE [MRNA]</scope>
</reference>
<reference key="2">
    <citation type="journal article" date="2009" name="PLoS Biol.">
        <title>Lineage-specific biology revealed by a finished genome assembly of the mouse.</title>
        <authorList>
            <person name="Church D.M."/>
            <person name="Goodstadt L."/>
            <person name="Hillier L.W."/>
            <person name="Zody M.C."/>
            <person name="Goldstein S."/>
            <person name="She X."/>
            <person name="Bult C.J."/>
            <person name="Agarwala R."/>
            <person name="Cherry J.L."/>
            <person name="DiCuccio M."/>
            <person name="Hlavina W."/>
            <person name="Kapustin Y."/>
            <person name="Meric P."/>
            <person name="Maglott D."/>
            <person name="Birtle Z."/>
            <person name="Marques A.C."/>
            <person name="Graves T."/>
            <person name="Zhou S."/>
            <person name="Teague B."/>
            <person name="Potamousis K."/>
            <person name="Churas C."/>
            <person name="Place M."/>
            <person name="Herschleb J."/>
            <person name="Runnheim R."/>
            <person name="Forrest D."/>
            <person name="Amos-Landgraf J."/>
            <person name="Schwartz D.C."/>
            <person name="Cheng Z."/>
            <person name="Lindblad-Toh K."/>
            <person name="Eichler E.E."/>
            <person name="Ponting C.P."/>
        </authorList>
    </citation>
    <scope>NUCLEOTIDE SEQUENCE [LARGE SCALE GENOMIC DNA]</scope>
    <source>
        <strain>C57BL/6J</strain>
    </source>
</reference>
<reference key="3">
    <citation type="journal article" date="2003" name="J. Biol. Chem.">
        <title>Characterization of the interaction of the stress kinase SPAK with the Na+-K+-2Cl- cotransporter in the nervous system: evidence for a scaffolding role of the kinase.</title>
        <authorList>
            <person name="Piechotta K."/>
            <person name="Garbarini N."/>
            <person name="England R."/>
            <person name="Delpire E."/>
        </authorList>
    </citation>
    <scope>FUNCTION</scope>
    <scope>ACTIVITY REGULATION</scope>
    <scope>DOMAIN</scope>
    <scope>MUTAGENESIS OF PHE-78 AND 135-ARG-VAL-136</scope>
</reference>
<reference key="4">
    <citation type="journal article" date="2022" name="Sci. Adv.">
        <title>Inhibition mechanism of NKCC1 involves the carboxyl terminus and long-range conformational coupling.</title>
        <authorList>
            <person name="Moseng M.A."/>
            <person name="Su C.C."/>
            <person name="Rios K."/>
            <person name="Cui M."/>
            <person name="Lyu M."/>
            <person name="Glaza P."/>
            <person name="Klenotic P.A."/>
            <person name="Delpire E."/>
            <person name="Yu E.W."/>
        </authorList>
    </citation>
    <scope>FUNCTION</scope>
    <scope>ACTIVITY REGULATION</scope>
    <scope>MUTAGENESIS OF ARG-794</scope>
</reference>
<reference key="5">
    <citation type="journal article" date="2006" name="Mol. Cell. Biol.">
        <title>Characterization of SPAK and OSR1, regulatory kinases of the Na-K-2Cl cotransporter.</title>
        <authorList>
            <person name="Gagnon K.B."/>
            <person name="England R."/>
            <person name="Delpire E."/>
        </authorList>
    </citation>
    <scope>ACTIVITY REGULATION</scope>
</reference>
<reference key="6">
    <citation type="journal article" date="2009" name="Immunity">
        <title>The phagosomal proteome in interferon-gamma-activated macrophages.</title>
        <authorList>
            <person name="Trost M."/>
            <person name="English L."/>
            <person name="Lemieux S."/>
            <person name="Courcelles M."/>
            <person name="Desjardins M."/>
            <person name="Thibault P."/>
        </authorList>
    </citation>
    <scope>PHOSPHORYLATION [LARGE SCALE ANALYSIS] AT THR-259 AND SER-933</scope>
    <scope>IDENTIFICATION BY MASS SPECTROMETRY [LARGE SCALE ANALYSIS]</scope>
</reference>
<reference key="7">
    <citation type="journal article" date="2009" name="Mol. Cell. Proteomics">
        <title>The mouse C2C12 myoblast cell surface N-linked glycoproteome: identification, glycosite occupancy, and membrane orientation.</title>
        <authorList>
            <person name="Gundry R.L."/>
            <person name="Raginski K."/>
            <person name="Tarasova Y."/>
            <person name="Tchernyshyov I."/>
            <person name="Bausch-Fluck D."/>
            <person name="Elliott S.T."/>
            <person name="Boheler K.R."/>
            <person name="Van Eyk J.E."/>
            <person name="Wollscheid B."/>
        </authorList>
    </citation>
    <scope>GLYCOSYLATION [LARGE SCALE ANALYSIS] AT ASN-546</scope>
    <source>
        <tissue>Myoblast</tissue>
    </source>
</reference>
<reference key="8">
    <citation type="journal article" date="2010" name="Cell">
        <title>A tissue-specific atlas of mouse protein phosphorylation and expression.</title>
        <authorList>
            <person name="Huttlin E.L."/>
            <person name="Jedrychowski M.P."/>
            <person name="Elias J.E."/>
            <person name="Goswami T."/>
            <person name="Rad R."/>
            <person name="Beausoleil S.A."/>
            <person name="Villen J."/>
            <person name="Haas W."/>
            <person name="Sowa M.E."/>
            <person name="Gygi S.P."/>
        </authorList>
    </citation>
    <scope>PHOSPHORYLATION [LARGE SCALE ANALYSIS] AT SER-937 AND SER-987</scope>
    <scope>IDENTIFICATION BY MASS SPECTROMETRY [LARGE SCALE ANALYSIS]</scope>
    <source>
        <tissue>Brain</tissue>
        <tissue>Brown adipose tissue</tissue>
        <tissue>Kidney</tissue>
        <tissue>Lung</tissue>
        <tissue>Pancreas</tissue>
        <tissue>Spleen</tissue>
        <tissue>Testis</tissue>
    </source>
</reference>
<reference key="9">
    <citation type="journal article" date="2011" name="Proc. Natl. Acad. Sci. U.S.A.">
        <title>Impaired phosphorylation of Na(+)-K(+)-2Cl(-) cotransporter by oxidative stress-responsive kinase-1 deficiency manifests hypotension and Bartter-like syndrome.</title>
        <authorList>
            <person name="Lin S.H."/>
            <person name="Yu I.S."/>
            <person name="Jiang S.T."/>
            <person name="Lin S.W."/>
            <person name="Chu P."/>
            <person name="Chen A."/>
            <person name="Sytwu H.K."/>
            <person name="Sohara E."/>
            <person name="Uchida S."/>
            <person name="Sasaki S."/>
            <person name="Yang S.S."/>
        </authorList>
    </citation>
    <scope>ACTIVITY REGULATION</scope>
</reference>
<reference key="10">
    <citation type="journal article" date="2020" name="Brain">
        <title>SLC12A2 variants cause a neurodevelopmental disorder or cochleovestibular defect.</title>
        <authorList>
            <person name="McNeill A."/>
            <person name="Iovino E."/>
            <person name="Mansard L."/>
            <person name="Vache C."/>
            <person name="Baux D."/>
            <person name="Bedoukian E."/>
            <person name="Cox H."/>
            <person name="Dean J."/>
            <person name="Goudie D."/>
            <person name="Kumar A."/>
            <person name="Newbury-Ecob R."/>
            <person name="Fallerini C."/>
            <person name="Renieri A."/>
            <person name="Lopergolo D."/>
            <person name="Mari F."/>
            <person name="Blanchet C."/>
            <person name="Willems M."/>
            <person name="Roux A.F."/>
            <person name="Pippucci T."/>
            <person name="Delpire E."/>
        </authorList>
    </citation>
    <scope>MUTAGENESIS OF ALA-320; ASN-369; ALA-372; ARG-403; 885-TRP--SER-1205 AND GLU-973</scope>
    <scope>FUNCTION</scope>
</reference>
<reference key="11">
    <citation type="journal article" date="2020" name="PLoS Genet.">
        <title>Variants encoding a restricted carboxy-terminal domain of SLC12A2 cause hereditary hearing loss in humans.</title>
        <authorList>
            <person name="Mutai H."/>
            <person name="Wasano K."/>
            <person name="Momozawa Y."/>
            <person name="Kamatani Y."/>
            <person name="Miya F."/>
            <person name="Masuda S."/>
            <person name="Morimoto N."/>
            <person name="Nara K."/>
            <person name="Takahashi S."/>
            <person name="Tsunoda T."/>
            <person name="Homma K."/>
            <person name="Kubo M."/>
            <person name="Matsunaga T."/>
        </authorList>
    </citation>
    <scope>TISSUE SPECIFICITY</scope>
</reference>